<comment type="function">
    <text evidence="1">Component of the NOP7 complex, which is required for maturation of the 25S and 5.8S ribosomal RNAs and formation of the 60S ribosome.</text>
</comment>
<comment type="subunit">
    <text evidence="1">Component of the NOP7 complex, composed of erb1, nop7 and ytm1. The complex is held together by erb1, which interacts with nop7 via its N-terminal domain and with ytm1 via a high-affinity interaction between the seven-bladed beta-propeller domains of the 2 proteins. The NOP7 complex associates with the 66S pre-ribosome. Interacts (via UBL domain) with mdn1 (via VWFA/MIDAS domain).</text>
</comment>
<comment type="subcellular location">
    <subcellularLocation>
        <location evidence="1">Nucleus</location>
        <location evidence="1">Nucleolus</location>
    </subcellularLocation>
    <subcellularLocation>
        <location evidence="1">Nucleus</location>
        <location evidence="1">Nucleoplasm</location>
    </subcellularLocation>
</comment>
<comment type="similarity">
    <text evidence="1">Belongs to the WD repeat WDR12/YTM1 family.</text>
</comment>
<reference key="1">
    <citation type="journal article" date="2013" name="G3 (Bethesda)">
        <title>Comparative genomics of a plant-pathogenic fungus, Pyrenophora tritici-repentis, reveals transduplication and the impact of repeat elements on pathogenicity and population divergence.</title>
        <authorList>
            <person name="Manning V.A."/>
            <person name="Pandelova I."/>
            <person name="Dhillon B."/>
            <person name="Wilhelm L.J."/>
            <person name="Goodwin S.B."/>
            <person name="Berlin A.M."/>
            <person name="Figueroa M."/>
            <person name="Freitag M."/>
            <person name="Hane J.K."/>
            <person name="Henrissat B."/>
            <person name="Holman W.H."/>
            <person name="Kodira C.D."/>
            <person name="Martin J."/>
            <person name="Oliver R.P."/>
            <person name="Robbertse B."/>
            <person name="Schackwitz W."/>
            <person name="Schwartz D.C."/>
            <person name="Spatafora J.W."/>
            <person name="Turgeon B.G."/>
            <person name="Yandava C."/>
            <person name="Young S."/>
            <person name="Zhou S."/>
            <person name="Zeng Q."/>
            <person name="Grigoriev I.V."/>
            <person name="Ma L.-J."/>
            <person name="Ciuffetti L.M."/>
        </authorList>
    </citation>
    <scope>NUCLEOTIDE SEQUENCE [LARGE SCALE GENOMIC DNA]</scope>
    <source>
        <strain>Pt-1C-BFP</strain>
    </source>
</reference>
<accession>B2VZH2</accession>
<evidence type="ECO:0000255" key="1">
    <source>
        <dbReference type="HAMAP-Rule" id="MF_03029"/>
    </source>
</evidence>
<evidence type="ECO:0000256" key="2">
    <source>
        <dbReference type="SAM" id="MobiDB-lite"/>
    </source>
</evidence>
<organism>
    <name type="scientific">Pyrenophora tritici-repentis (strain Pt-1C-BFP)</name>
    <name type="common">Wheat tan spot fungus</name>
    <name type="synonym">Drechslera tritici-repentis</name>
    <dbReference type="NCBI Taxonomy" id="426418"/>
    <lineage>
        <taxon>Eukaryota</taxon>
        <taxon>Fungi</taxon>
        <taxon>Dikarya</taxon>
        <taxon>Ascomycota</taxon>
        <taxon>Pezizomycotina</taxon>
        <taxon>Dothideomycetes</taxon>
        <taxon>Pleosporomycetidae</taxon>
        <taxon>Pleosporales</taxon>
        <taxon>Pleosporineae</taxon>
        <taxon>Pleosporaceae</taxon>
        <taxon>Pyrenophora</taxon>
    </lineage>
</organism>
<protein>
    <recommendedName>
        <fullName evidence="1">Ribosome biogenesis protein ytm1</fullName>
    </recommendedName>
</protein>
<name>YTM1_PYRTR</name>
<dbReference type="EMBL" id="DS231616">
    <property type="protein sequence ID" value="EDU45335.1"/>
    <property type="molecule type" value="Genomic_DNA"/>
</dbReference>
<dbReference type="RefSeq" id="XP_001933145.1">
    <property type="nucleotide sequence ID" value="XM_001933110.1"/>
</dbReference>
<dbReference type="SMR" id="B2VZH2"/>
<dbReference type="FunCoup" id="B2VZH2">
    <property type="interactions" value="873"/>
</dbReference>
<dbReference type="STRING" id="426418.B2VZH2"/>
<dbReference type="EnsemblFungi" id="EDU45335">
    <property type="protein sequence ID" value="EDU45335"/>
    <property type="gene ID" value="PTRG_02812"/>
</dbReference>
<dbReference type="GeneID" id="6341035"/>
<dbReference type="KEGG" id="ptrr:6341035"/>
<dbReference type="eggNOG" id="KOG0313">
    <property type="taxonomic scope" value="Eukaryota"/>
</dbReference>
<dbReference type="HOGENOM" id="CLU_000288_57_0_1"/>
<dbReference type="InParanoid" id="B2VZH2"/>
<dbReference type="OMA" id="DHKYVEF"/>
<dbReference type="OrthoDB" id="7359at28556"/>
<dbReference type="Proteomes" id="UP000001471">
    <property type="component" value="Unassembled WGS sequence"/>
</dbReference>
<dbReference type="GO" id="GO:0005654">
    <property type="term" value="C:nucleoplasm"/>
    <property type="evidence" value="ECO:0007669"/>
    <property type="project" value="UniProtKB-SubCell"/>
</dbReference>
<dbReference type="GO" id="GO:0070545">
    <property type="term" value="C:PeBoW complex"/>
    <property type="evidence" value="ECO:0007669"/>
    <property type="project" value="EnsemblFungi"/>
</dbReference>
<dbReference type="GO" id="GO:0030687">
    <property type="term" value="C:preribosome, large subunit precursor"/>
    <property type="evidence" value="ECO:0007669"/>
    <property type="project" value="UniProtKB-UniRule"/>
</dbReference>
<dbReference type="GO" id="GO:0043021">
    <property type="term" value="F:ribonucleoprotein complex binding"/>
    <property type="evidence" value="ECO:0007669"/>
    <property type="project" value="UniProtKB-UniRule"/>
</dbReference>
<dbReference type="GO" id="GO:0051276">
    <property type="term" value="P:chromosome organization"/>
    <property type="evidence" value="ECO:0007669"/>
    <property type="project" value="EnsemblFungi"/>
</dbReference>
<dbReference type="GO" id="GO:0000466">
    <property type="term" value="P:maturation of 5.8S rRNA from tricistronic rRNA transcript (SSU-rRNA, 5.8S rRNA, LSU-rRNA)"/>
    <property type="evidence" value="ECO:0007669"/>
    <property type="project" value="UniProtKB-UniRule"/>
</dbReference>
<dbReference type="GO" id="GO:0000463">
    <property type="term" value="P:maturation of LSU-rRNA from tricistronic rRNA transcript (SSU-rRNA, 5.8S rRNA, LSU-rRNA)"/>
    <property type="evidence" value="ECO:0007669"/>
    <property type="project" value="UniProtKB-UniRule"/>
</dbReference>
<dbReference type="GO" id="GO:0110136">
    <property type="term" value="P:protein-RNA complex remodeling"/>
    <property type="evidence" value="ECO:0007669"/>
    <property type="project" value="EnsemblFungi"/>
</dbReference>
<dbReference type="CDD" id="cd00200">
    <property type="entry name" value="WD40"/>
    <property type="match status" value="1"/>
</dbReference>
<dbReference type="Gene3D" id="2.130.10.10">
    <property type="entry name" value="YVTN repeat-like/Quinoprotein amine dehydrogenase"/>
    <property type="match status" value="1"/>
</dbReference>
<dbReference type="HAMAP" id="MF_03029">
    <property type="entry name" value="WDR12"/>
    <property type="match status" value="1"/>
</dbReference>
<dbReference type="InterPro" id="IPR020472">
    <property type="entry name" value="G-protein_beta_WD-40_rep"/>
</dbReference>
<dbReference type="InterPro" id="IPR012972">
    <property type="entry name" value="NLE"/>
</dbReference>
<dbReference type="InterPro" id="IPR015943">
    <property type="entry name" value="WD40/YVTN_repeat-like_dom_sf"/>
</dbReference>
<dbReference type="InterPro" id="IPR019775">
    <property type="entry name" value="WD40_repeat_CS"/>
</dbReference>
<dbReference type="InterPro" id="IPR036322">
    <property type="entry name" value="WD40_repeat_dom_sf"/>
</dbReference>
<dbReference type="InterPro" id="IPR001680">
    <property type="entry name" value="WD40_rpt"/>
</dbReference>
<dbReference type="InterPro" id="IPR028599">
    <property type="entry name" value="WDR12/Ytm1"/>
</dbReference>
<dbReference type="PANTHER" id="PTHR19855:SF11">
    <property type="entry name" value="RIBOSOME BIOGENESIS PROTEIN WDR12"/>
    <property type="match status" value="1"/>
</dbReference>
<dbReference type="PANTHER" id="PTHR19855">
    <property type="entry name" value="WD40 REPEAT PROTEIN 12, 37"/>
    <property type="match status" value="1"/>
</dbReference>
<dbReference type="Pfam" id="PF08154">
    <property type="entry name" value="NLE"/>
    <property type="match status" value="1"/>
</dbReference>
<dbReference type="Pfam" id="PF00400">
    <property type="entry name" value="WD40"/>
    <property type="match status" value="4"/>
</dbReference>
<dbReference type="PRINTS" id="PR00320">
    <property type="entry name" value="GPROTEINBRPT"/>
</dbReference>
<dbReference type="SMART" id="SM00320">
    <property type="entry name" value="WD40"/>
    <property type="match status" value="7"/>
</dbReference>
<dbReference type="SUPFAM" id="SSF50978">
    <property type="entry name" value="WD40 repeat-like"/>
    <property type="match status" value="1"/>
</dbReference>
<dbReference type="PROSITE" id="PS00678">
    <property type="entry name" value="WD_REPEATS_1"/>
    <property type="match status" value="3"/>
</dbReference>
<dbReference type="PROSITE" id="PS50082">
    <property type="entry name" value="WD_REPEATS_2"/>
    <property type="match status" value="2"/>
</dbReference>
<dbReference type="PROSITE" id="PS50294">
    <property type="entry name" value="WD_REPEATS_REGION"/>
    <property type="match status" value="1"/>
</dbReference>
<feature type="chain" id="PRO_0000369600" description="Ribosome biogenesis protein ytm1">
    <location>
        <begin position="1"/>
        <end position="460"/>
    </location>
</feature>
<feature type="repeat" description="WD 1">
    <location>
        <begin position="105"/>
        <end position="148"/>
    </location>
</feature>
<feature type="repeat" description="WD 2">
    <location>
        <begin position="155"/>
        <end position="193"/>
    </location>
</feature>
<feature type="repeat" description="WD 3">
    <location>
        <begin position="200"/>
        <end position="239"/>
    </location>
</feature>
<feature type="repeat" description="WD 4">
    <location>
        <begin position="275"/>
        <end position="315"/>
    </location>
</feature>
<feature type="repeat" description="WD 5">
    <location>
        <begin position="317"/>
        <end position="356"/>
    </location>
</feature>
<feature type="repeat" description="WD 6">
    <location>
        <begin position="362"/>
        <end position="402"/>
    </location>
</feature>
<feature type="repeat" description="WD 7">
    <location>
        <begin position="427"/>
        <end position="460"/>
    </location>
</feature>
<feature type="region of interest" description="Ubiquitin-like (UBL) domain" evidence="1">
    <location>
        <begin position="10"/>
        <end position="93"/>
    </location>
</feature>
<feature type="region of interest" description="Disordered" evidence="2">
    <location>
        <begin position="239"/>
        <end position="264"/>
    </location>
</feature>
<feature type="compositionally biased region" description="Low complexity" evidence="2">
    <location>
        <begin position="239"/>
        <end position="252"/>
    </location>
</feature>
<gene>
    <name type="primary">ytm1</name>
    <name type="ORF">PTRG_02812</name>
</gene>
<keyword id="KW-0539">Nucleus</keyword>
<keyword id="KW-1185">Reference proteome</keyword>
<keyword id="KW-0677">Repeat</keyword>
<keyword id="KW-0690">Ribosome biogenesis</keyword>
<keyword id="KW-0698">rRNA processing</keyword>
<keyword id="KW-0853">WD repeat</keyword>
<sequence>MDVDAAETKVQIRLTTRDSSLQISEEPNVLLVQTSLTRHKLSTLVNELLHRGDETRIPFDILINGEFLRTTIDEFLTKNGINAESTLDVEYTRALVPPLNVTSFEHDDWVSAVDVLSGVQSGQERILSASYDGLVRVWNTSGDVLATSEAPNNGGRITSLKTAKWLSEKKMVAAGLDNNVRVYKYDDDARTIITALELVNHRWGVEDVAVHAPSNRILSASSDTTISLFSSNAKENPVAPANLLPSSSAASNKRQKLSKPDRTVPARGALATFTGHSSPVSSVIFKPDDATVAYSASHDHTLKTWDLPTSTCVDTRTTGHSLLSLCAIPSRNLLATGTSARHITLIDPRASATQISVMTLRGHKNGVVSLDTDPSSEHNLASASHDGTVQIWDLRNVSTGSQIGEGMQGESVYTIYRQGRDTSKSHGEGTKVFSVRWDRAVGIVSGGEDKRVQINRALGS</sequence>
<proteinExistence type="inferred from homology"/>